<proteinExistence type="inferred from homology"/>
<sequence length="186" mass="20921">MDKVTLKKNLQEKMDKALKVLDHELKGLRTGRASVNLLDSVTVEAYGDRMPLSQVASLTTPDARTINVQVWDKSMVSSVEKAITVANLGLTPSSDGQLIRLPIPALTEERRKELAKLAHKYGEDTKISLRNIRRDGNEELKKMEKDNIIAKDEHHSLAEQVQKLTDEYSSKVDSAIKQKEQEIMTV</sequence>
<keyword id="KW-0963">Cytoplasm</keyword>
<keyword id="KW-0648">Protein biosynthesis</keyword>
<dbReference type="EMBL" id="CP000087">
    <property type="protein sequence ID" value="ABE05213.1"/>
    <property type="molecule type" value="Genomic_DNA"/>
</dbReference>
<dbReference type="RefSeq" id="WP_011477791.1">
    <property type="nucleotide sequence ID" value="NC_007940.1"/>
</dbReference>
<dbReference type="SMR" id="Q1RHF1"/>
<dbReference type="KEGG" id="rbe:RBE_1132"/>
<dbReference type="eggNOG" id="COG0233">
    <property type="taxonomic scope" value="Bacteria"/>
</dbReference>
<dbReference type="HOGENOM" id="CLU_073981_2_1_5"/>
<dbReference type="OrthoDB" id="9804006at2"/>
<dbReference type="Proteomes" id="UP000001951">
    <property type="component" value="Chromosome"/>
</dbReference>
<dbReference type="GO" id="GO:0005829">
    <property type="term" value="C:cytosol"/>
    <property type="evidence" value="ECO:0007669"/>
    <property type="project" value="GOC"/>
</dbReference>
<dbReference type="GO" id="GO:0043023">
    <property type="term" value="F:ribosomal large subunit binding"/>
    <property type="evidence" value="ECO:0007669"/>
    <property type="project" value="TreeGrafter"/>
</dbReference>
<dbReference type="GO" id="GO:0002184">
    <property type="term" value="P:cytoplasmic translational termination"/>
    <property type="evidence" value="ECO:0007669"/>
    <property type="project" value="TreeGrafter"/>
</dbReference>
<dbReference type="CDD" id="cd00520">
    <property type="entry name" value="RRF"/>
    <property type="match status" value="1"/>
</dbReference>
<dbReference type="FunFam" id="1.10.132.20:FF:000001">
    <property type="entry name" value="Ribosome-recycling factor"/>
    <property type="match status" value="1"/>
</dbReference>
<dbReference type="FunFam" id="3.30.1360.40:FF:000001">
    <property type="entry name" value="Ribosome-recycling factor"/>
    <property type="match status" value="1"/>
</dbReference>
<dbReference type="Gene3D" id="3.30.1360.40">
    <property type="match status" value="1"/>
</dbReference>
<dbReference type="Gene3D" id="1.10.132.20">
    <property type="entry name" value="Ribosome-recycling factor"/>
    <property type="match status" value="1"/>
</dbReference>
<dbReference type="HAMAP" id="MF_00040">
    <property type="entry name" value="RRF"/>
    <property type="match status" value="1"/>
</dbReference>
<dbReference type="InterPro" id="IPR002661">
    <property type="entry name" value="Ribosome_recyc_fac"/>
</dbReference>
<dbReference type="InterPro" id="IPR023584">
    <property type="entry name" value="Ribosome_recyc_fac_dom"/>
</dbReference>
<dbReference type="InterPro" id="IPR036191">
    <property type="entry name" value="RRF_sf"/>
</dbReference>
<dbReference type="NCBIfam" id="TIGR00496">
    <property type="entry name" value="frr"/>
    <property type="match status" value="1"/>
</dbReference>
<dbReference type="PANTHER" id="PTHR20982:SF3">
    <property type="entry name" value="MITOCHONDRIAL RIBOSOME RECYCLING FACTOR PSEUDO 1"/>
    <property type="match status" value="1"/>
</dbReference>
<dbReference type="PANTHER" id="PTHR20982">
    <property type="entry name" value="RIBOSOME RECYCLING FACTOR"/>
    <property type="match status" value="1"/>
</dbReference>
<dbReference type="Pfam" id="PF01765">
    <property type="entry name" value="RRF"/>
    <property type="match status" value="1"/>
</dbReference>
<dbReference type="SUPFAM" id="SSF55194">
    <property type="entry name" value="Ribosome recycling factor, RRF"/>
    <property type="match status" value="1"/>
</dbReference>
<reference key="1">
    <citation type="journal article" date="2006" name="PLoS Genet.">
        <title>Genome sequence of Rickettsia bellii illuminates the role of amoebae in gene exchanges between intracellular pathogens.</title>
        <authorList>
            <person name="Ogata H."/>
            <person name="La Scola B."/>
            <person name="Audic S."/>
            <person name="Renesto P."/>
            <person name="Blanc G."/>
            <person name="Robert C."/>
            <person name="Fournier P.-E."/>
            <person name="Claverie J.-M."/>
            <person name="Raoult D."/>
        </authorList>
    </citation>
    <scope>NUCLEOTIDE SEQUENCE [LARGE SCALE GENOMIC DNA]</scope>
    <source>
        <strain>RML369-C</strain>
    </source>
</reference>
<feature type="chain" id="PRO_0000278065" description="Ribosome-recycling factor">
    <location>
        <begin position="1"/>
        <end position="186"/>
    </location>
</feature>
<name>RRF_RICBR</name>
<organism>
    <name type="scientific">Rickettsia bellii (strain RML369-C)</name>
    <dbReference type="NCBI Taxonomy" id="336407"/>
    <lineage>
        <taxon>Bacteria</taxon>
        <taxon>Pseudomonadati</taxon>
        <taxon>Pseudomonadota</taxon>
        <taxon>Alphaproteobacteria</taxon>
        <taxon>Rickettsiales</taxon>
        <taxon>Rickettsiaceae</taxon>
        <taxon>Rickettsieae</taxon>
        <taxon>Rickettsia</taxon>
        <taxon>belli group</taxon>
    </lineage>
</organism>
<comment type="function">
    <text evidence="1">Responsible for the release of ribosomes from messenger RNA at the termination of protein biosynthesis. May increase the efficiency of translation by recycling ribosomes from one round of translation to another.</text>
</comment>
<comment type="subcellular location">
    <subcellularLocation>
        <location evidence="1">Cytoplasm</location>
    </subcellularLocation>
</comment>
<comment type="similarity">
    <text evidence="1">Belongs to the RRF family.</text>
</comment>
<gene>
    <name evidence="1" type="primary">frr</name>
    <name type="ordered locus">RBE_1132</name>
</gene>
<accession>Q1RHF1</accession>
<protein>
    <recommendedName>
        <fullName evidence="1">Ribosome-recycling factor</fullName>
        <shortName evidence="1">RRF</shortName>
    </recommendedName>
    <alternativeName>
        <fullName evidence="1">Ribosome-releasing factor</fullName>
    </alternativeName>
</protein>
<evidence type="ECO:0000255" key="1">
    <source>
        <dbReference type="HAMAP-Rule" id="MF_00040"/>
    </source>
</evidence>